<comment type="function">
    <text evidence="4 5 6 7">G-protein-coupled receptor of lysophosphatidylserine (LysoPS) that plays different roles in immune response (PubMed:21097509, PubMed:26851221, PubMed:34107271). Acts a damage-sensing receptor that triggers tissue repair upon recognition of dying neutrophils. Mechanistically, apoptotic neutrophils release lysophosphatydilserine that are recognized by type 3 innate lymphoid cells (ILC3s) via GPR34, which activates downstream PI3K-AKT and RAS-ERK signaling pathways leading to STAT3 activation and IL-22 production (PubMed:34107271). Plays an important role in microglial function, controlling morphology and phagocytosis (PubMed:25142016).</text>
</comment>
<comment type="subcellular location">
    <subcellularLocation>
        <location evidence="1">Cell membrane</location>
        <topology evidence="1">Multi-pass membrane protein</topology>
    </subcellularLocation>
</comment>
<comment type="tissue specificity">
    <text evidence="4">Highly expressed in glial cells such as astrocytes and microglia.</text>
</comment>
<comment type="induction">
    <text evidence="6">MAPKs and NF-kappa-B reduce GPR34 mRNA expression independent of TLRs and TLR stimulation also reduced GPR34 mRNA levels.</text>
</comment>
<comment type="disruption phenotype">
    <text evidence="4 5 6">GPR34-deficiency mice show no difference in microglial motility but display a significantly reduced phagocytosis activity (PubMed:25142016). In addition, they are more susceptible towards disseminating Cryptococcus neoformans infection with higher pathogen burden in extrapulmonary tissues after pulmonary infection (PubMed:21097509). GPR34-deficient dendritic cells show a commitment to apoptosis, which could result in an altered immune response (PubMed:26851221).</text>
</comment>
<comment type="similarity">
    <text evidence="3">Belongs to the G-protein coupled receptor 1 family.</text>
</comment>
<organism>
    <name type="scientific">Mus musculus</name>
    <name type="common">Mouse</name>
    <dbReference type="NCBI Taxonomy" id="10090"/>
    <lineage>
        <taxon>Eukaryota</taxon>
        <taxon>Metazoa</taxon>
        <taxon>Chordata</taxon>
        <taxon>Craniata</taxon>
        <taxon>Vertebrata</taxon>
        <taxon>Euteleostomi</taxon>
        <taxon>Mammalia</taxon>
        <taxon>Eutheria</taxon>
        <taxon>Euarchontoglires</taxon>
        <taxon>Glires</taxon>
        <taxon>Rodentia</taxon>
        <taxon>Myomorpha</taxon>
        <taxon>Muroidea</taxon>
        <taxon>Muridae</taxon>
        <taxon>Murinae</taxon>
        <taxon>Mus</taxon>
        <taxon>Mus</taxon>
    </lineage>
</organism>
<feature type="chain" id="PRO_0000069560" description="Probable G-protein coupled receptor 34">
    <location>
        <begin position="1"/>
        <end position="375"/>
    </location>
</feature>
<feature type="topological domain" description="Extracellular" evidence="2">
    <location>
        <begin position="1"/>
        <end position="54"/>
    </location>
</feature>
<feature type="transmembrane region" description="Helical; Name=1" evidence="2">
    <location>
        <begin position="55"/>
        <end position="75"/>
    </location>
</feature>
<feature type="topological domain" description="Cytoplasmic" evidence="2">
    <location>
        <begin position="76"/>
        <end position="81"/>
    </location>
</feature>
<feature type="transmembrane region" description="Helical; Name=2" evidence="2">
    <location>
        <begin position="82"/>
        <end position="102"/>
    </location>
</feature>
<feature type="topological domain" description="Extracellular" evidence="2">
    <location>
        <begin position="103"/>
        <end position="121"/>
    </location>
</feature>
<feature type="transmembrane region" description="Helical; Name=3" evidence="2">
    <location>
        <begin position="122"/>
        <end position="142"/>
    </location>
</feature>
<feature type="topological domain" description="Cytoplasmic" evidence="2">
    <location>
        <begin position="143"/>
        <end position="164"/>
    </location>
</feature>
<feature type="transmembrane region" description="Helical; Name=4" evidence="2">
    <location>
        <begin position="165"/>
        <end position="185"/>
    </location>
</feature>
<feature type="topological domain" description="Extracellular" evidence="2">
    <location>
        <begin position="186"/>
        <end position="209"/>
    </location>
</feature>
<feature type="transmembrane region" description="Helical; Name=5" evidence="2">
    <location>
        <begin position="210"/>
        <end position="230"/>
    </location>
</feature>
<feature type="topological domain" description="Cytoplasmic" evidence="2">
    <location>
        <begin position="231"/>
        <end position="262"/>
    </location>
</feature>
<feature type="transmembrane region" description="Helical; Name=6" evidence="2">
    <location>
        <begin position="263"/>
        <end position="283"/>
    </location>
</feature>
<feature type="topological domain" description="Extracellular" evidence="2">
    <location>
        <begin position="284"/>
        <end position="303"/>
    </location>
</feature>
<feature type="transmembrane region" description="Helical; Name=7" evidence="2">
    <location>
        <begin position="304"/>
        <end position="324"/>
    </location>
</feature>
<feature type="topological domain" description="Cytoplasmic" evidence="2">
    <location>
        <begin position="325"/>
        <end position="375"/>
    </location>
</feature>
<feature type="glycosylation site" description="N-linked (GlcNAc...) asparagine" evidence="2">
    <location>
        <position position="21"/>
    </location>
</feature>
<feature type="glycosylation site" description="N-linked (GlcNAc...) asparagine" evidence="2">
    <location>
        <position position="29"/>
    </location>
</feature>
<feature type="glycosylation site" description="N-linked (GlcNAc...) asparagine" evidence="2">
    <location>
        <position position="35"/>
    </location>
</feature>
<feature type="glycosylation site" description="N-linked (GlcNAc...) asparagine" evidence="2">
    <location>
        <position position="193"/>
    </location>
</feature>
<feature type="glycosylation site" description="N-linked (GlcNAc...) asparagine" evidence="2">
    <location>
        <position position="288"/>
    </location>
</feature>
<feature type="disulfide bond" evidence="3">
    <location>
        <begin position="120"/>
        <end position="197"/>
    </location>
</feature>
<proteinExistence type="evidence at transcript level"/>
<name>GPR34_MOUSE</name>
<evidence type="ECO:0000250" key="1">
    <source>
        <dbReference type="UniProtKB" id="Q9UPC5"/>
    </source>
</evidence>
<evidence type="ECO:0000255" key="2"/>
<evidence type="ECO:0000255" key="3">
    <source>
        <dbReference type="PROSITE-ProRule" id="PRU00521"/>
    </source>
</evidence>
<evidence type="ECO:0000269" key="4">
    <source>
    </source>
</evidence>
<evidence type="ECO:0000269" key="5">
    <source>
    </source>
</evidence>
<evidence type="ECO:0000269" key="6">
    <source>
    </source>
</evidence>
<evidence type="ECO:0000269" key="7">
    <source>
    </source>
</evidence>
<keyword id="KW-1003">Cell membrane</keyword>
<keyword id="KW-1015">Disulfide bond</keyword>
<keyword id="KW-0297">G-protein coupled receptor</keyword>
<keyword id="KW-0325">Glycoprotein</keyword>
<keyword id="KW-0472">Membrane</keyword>
<keyword id="KW-0675">Receptor</keyword>
<keyword id="KW-1185">Reference proteome</keyword>
<keyword id="KW-0807">Transducer</keyword>
<keyword id="KW-0812">Transmembrane</keyword>
<keyword id="KW-1133">Transmembrane helix</keyword>
<dbReference type="EMBL" id="AF081916">
    <property type="protein sequence ID" value="AAD50550.2"/>
    <property type="molecule type" value="Genomic_DNA"/>
</dbReference>
<dbReference type="CCDS" id="CCDS30028.1"/>
<dbReference type="RefSeq" id="NP_035953.3">
    <property type="nucleotide sequence ID" value="NM_011823.4"/>
</dbReference>
<dbReference type="RefSeq" id="XP_006527687.1">
    <property type="nucleotide sequence ID" value="XM_006527624.3"/>
</dbReference>
<dbReference type="RefSeq" id="XP_006527688.1">
    <property type="nucleotide sequence ID" value="XM_006527625.5"/>
</dbReference>
<dbReference type="RefSeq" id="XP_036017841.1">
    <property type="nucleotide sequence ID" value="XM_036161948.1"/>
</dbReference>
<dbReference type="RefSeq" id="XP_036017842.1">
    <property type="nucleotide sequence ID" value="XM_036161949.1"/>
</dbReference>
<dbReference type="SMR" id="Q9R1K6"/>
<dbReference type="FunCoup" id="Q9R1K6">
    <property type="interactions" value="116"/>
</dbReference>
<dbReference type="STRING" id="10090.ENSMUSP00000042715"/>
<dbReference type="BindingDB" id="Q9R1K6"/>
<dbReference type="ChEMBL" id="CHEMBL1075291"/>
<dbReference type="GuidetoPHARMACOLOGY" id="101"/>
<dbReference type="GlyCosmos" id="Q9R1K6">
    <property type="glycosylation" value="5 sites, No reported glycans"/>
</dbReference>
<dbReference type="GlyGen" id="Q9R1K6">
    <property type="glycosylation" value="6 sites"/>
</dbReference>
<dbReference type="PhosphoSitePlus" id="Q9R1K6"/>
<dbReference type="PaxDb" id="10090-ENSMUSP00000042715"/>
<dbReference type="ProteomicsDB" id="271042"/>
<dbReference type="Antibodypedia" id="547">
    <property type="antibodies" value="291 antibodies from 30 providers"/>
</dbReference>
<dbReference type="DNASU" id="23890"/>
<dbReference type="Ensembl" id="ENSMUST00000041708.10">
    <property type="protein sequence ID" value="ENSMUSP00000042715.4"/>
    <property type="gene ID" value="ENSMUSG00000040229.12"/>
</dbReference>
<dbReference type="Ensembl" id="ENSMUST00000096492.4">
    <property type="protein sequence ID" value="ENSMUSP00000094236.4"/>
    <property type="gene ID" value="ENSMUSG00000040229.12"/>
</dbReference>
<dbReference type="GeneID" id="23890"/>
<dbReference type="KEGG" id="mmu:23890"/>
<dbReference type="UCSC" id="uc009srs.1">
    <property type="organism name" value="mouse"/>
</dbReference>
<dbReference type="AGR" id="MGI:1346334"/>
<dbReference type="CTD" id="2857"/>
<dbReference type="MGI" id="MGI:1346334">
    <property type="gene designation" value="Gpr34"/>
</dbReference>
<dbReference type="VEuPathDB" id="HostDB:ENSMUSG00000040229"/>
<dbReference type="eggNOG" id="ENOG502QT81">
    <property type="taxonomic scope" value="Eukaryota"/>
</dbReference>
<dbReference type="GeneTree" id="ENSGT01110000267167"/>
<dbReference type="HOGENOM" id="CLU_009579_8_2_1"/>
<dbReference type="InParanoid" id="Q9R1K6"/>
<dbReference type="OMA" id="CKLVGNL"/>
<dbReference type="OrthoDB" id="10005568at2759"/>
<dbReference type="PhylomeDB" id="Q9R1K6"/>
<dbReference type="TreeFam" id="TF330969"/>
<dbReference type="BioGRID-ORCS" id="23890">
    <property type="hits" value="0 hits in 75 CRISPR screens"/>
</dbReference>
<dbReference type="ChiTaRS" id="Gpr34">
    <property type="organism name" value="mouse"/>
</dbReference>
<dbReference type="PRO" id="PR:Q9R1K6"/>
<dbReference type="Proteomes" id="UP000000589">
    <property type="component" value="Chromosome X"/>
</dbReference>
<dbReference type="RNAct" id="Q9R1K6">
    <property type="molecule type" value="protein"/>
</dbReference>
<dbReference type="Bgee" id="ENSMUSG00000040229">
    <property type="expression patterns" value="Expressed in lumbar subsegment of spinal cord and 128 other cell types or tissues"/>
</dbReference>
<dbReference type="ExpressionAtlas" id="Q9R1K6">
    <property type="expression patterns" value="baseline and differential"/>
</dbReference>
<dbReference type="GO" id="GO:0005886">
    <property type="term" value="C:plasma membrane"/>
    <property type="evidence" value="ECO:0007669"/>
    <property type="project" value="UniProtKB-SubCell"/>
</dbReference>
<dbReference type="GO" id="GO:0004930">
    <property type="term" value="F:G protein-coupled receptor activity"/>
    <property type="evidence" value="ECO:0007669"/>
    <property type="project" value="UniProtKB-KW"/>
</dbReference>
<dbReference type="CDD" id="cd15148">
    <property type="entry name" value="7tmA_GPR34-like"/>
    <property type="match status" value="1"/>
</dbReference>
<dbReference type="FunFam" id="1.20.1070.10:FF:000150">
    <property type="entry name" value="probable G-protein coupled receptor 34"/>
    <property type="match status" value="1"/>
</dbReference>
<dbReference type="Gene3D" id="1.20.1070.10">
    <property type="entry name" value="Rhodopsin 7-helix transmembrane proteins"/>
    <property type="match status" value="1"/>
</dbReference>
<dbReference type="InterPro" id="IPR000276">
    <property type="entry name" value="GPCR_Rhodpsn"/>
</dbReference>
<dbReference type="InterPro" id="IPR017452">
    <property type="entry name" value="GPCR_Rhodpsn_7TM"/>
</dbReference>
<dbReference type="InterPro" id="IPR048057">
    <property type="entry name" value="GPR34_7tmA"/>
</dbReference>
<dbReference type="PANTHER" id="PTHR24233:SF1">
    <property type="entry name" value="G-PROTEIN COUPLED RECEPTOR 34-RELATED"/>
    <property type="match status" value="1"/>
</dbReference>
<dbReference type="PANTHER" id="PTHR24233">
    <property type="entry name" value="P2Y PURINOCEPTOR-RELATED G-PROTEIN COUPLED RECEPTOR"/>
    <property type="match status" value="1"/>
</dbReference>
<dbReference type="Pfam" id="PF00001">
    <property type="entry name" value="7tm_1"/>
    <property type="match status" value="1"/>
</dbReference>
<dbReference type="PRINTS" id="PR00237">
    <property type="entry name" value="GPCRRHODOPSN"/>
</dbReference>
<dbReference type="PRINTS" id="PR01157">
    <property type="entry name" value="P2YPURNOCPTR"/>
</dbReference>
<dbReference type="SUPFAM" id="SSF81321">
    <property type="entry name" value="Family A G protein-coupled receptor-like"/>
    <property type="match status" value="1"/>
</dbReference>
<dbReference type="PROSITE" id="PS00237">
    <property type="entry name" value="G_PROTEIN_RECEP_F1_1"/>
    <property type="match status" value="1"/>
</dbReference>
<dbReference type="PROSITE" id="PS50262">
    <property type="entry name" value="G_PROTEIN_RECEP_F1_2"/>
    <property type="match status" value="1"/>
</dbReference>
<sequence>MTTTSVDSWLCSSHGMHFITNYSDQASQNFSGVPNVTSCPMDEKLLSTVLTTFYSVIFLVGLVGNIIALYVFLGIHRKRNSIQIYLLNVAVADLLLIFCLPFRIMYHINQNKWTLGVILCKVVGTLFYMNMYISIILLGFISLDRYIKINRSIQQRRAITTKQSIYVCCIVWTVALAGFLTMIILTLKKGGHNSTMCFHYRDRHNAKGEAIFNFVLVVMFWLIFLLIILSYIKIGKNLLRISKRRSKFPNSGKYATTARNSFIVLIIFTICFVPYHAFRFIYISSQLNVSSCYWKEIIHKTNEIMLVFSSFNSCLDPVMYFLMSSNIRKIMCQLLFRRFQSEASRSESTSEFKPGHSLHDLSVTVKMPQYSTKGN</sequence>
<gene>
    <name type="primary">Gpr34</name>
</gene>
<reference key="1">
    <citation type="journal article" date="1999" name="Biochim. Biophys. Acta">
        <title>A novel subgroup of class I G-protein-coupled receptors.</title>
        <authorList>
            <person name="Schoneberg T."/>
            <person name="Schulz A."/>
            <person name="Grosse R."/>
            <person name="Schade R."/>
            <person name="Henklein P."/>
            <person name="Schultz G."/>
            <person name="Gudermann T."/>
        </authorList>
    </citation>
    <scope>NUCLEOTIDE SEQUENCE [GENOMIC DNA]</scope>
</reference>
<reference key="2">
    <citation type="journal article" date="2011" name="J. Biol. Chem.">
        <title>Altered immune response in mice deficient for the G protein-coupled receptor GPR34.</title>
        <authorList>
            <person name="Liebscher I."/>
            <person name="Mueller U."/>
            <person name="Teupser D."/>
            <person name="Engemaier E."/>
            <person name="Engel K.M."/>
            <person name="Ritscher L."/>
            <person name="Thor D."/>
            <person name="Sangkuhl K."/>
            <person name="Ricken A."/>
            <person name="Wurm A."/>
            <person name="Piehler D."/>
            <person name="Schmutzler S."/>
            <person name="Fuhrmann H."/>
            <person name="Albert F.W."/>
            <person name="Reichenbach A."/>
            <person name="Thiery J."/>
            <person name="Schoeneberg T."/>
            <person name="Schulz A."/>
        </authorList>
    </citation>
    <scope>FUNCTION</scope>
    <scope>DISRUPTION PHENOTYPE</scope>
    <scope>TISSUE SPECIFICITY</scope>
</reference>
<reference key="3">
    <citation type="journal article" date="2015" name="Glia">
        <title>Altered microglial phagocytosis in GPR34-deficient mice.</title>
        <authorList>
            <person name="Preissler J."/>
            <person name="Grosche A."/>
            <person name="Lede V."/>
            <person name="Le Duc D."/>
            <person name="Kruegel K."/>
            <person name="Matyash V."/>
            <person name="Szulzewsky F."/>
            <person name="Kallendrusch S."/>
            <person name="Immig K."/>
            <person name="Kettenmann H."/>
            <person name="Bechmann I."/>
            <person name="Schoeneberg T."/>
            <person name="Schulz A."/>
        </authorList>
    </citation>
    <scope>FUNCTION</scope>
    <scope>DISRUPTION PHENOTYPE</scope>
</reference>
<reference key="4">
    <citation type="journal article" date="2016" name="J. Immunol.">
        <title>Dendritic Cells Regulate GPR34 through Mitogenic Signals and Undergo Apoptosis in Its Absence.</title>
        <authorList>
            <person name="Jaeger E."/>
            <person name="Schulz A."/>
            <person name="Lede V."/>
            <person name="Lin C.C."/>
            <person name="Schoeneberg T."/>
            <person name="Le Duc D."/>
        </authorList>
    </citation>
    <scope>FUNCTION</scope>
    <scope>DISRUPTION PHENOTYPE</scope>
    <scope>INDUCTION</scope>
</reference>
<reference key="5">
    <citation type="journal article" date="2021" name="Immunity">
        <title>GPR34-mediated sensing of lysophosphatidylserine released by apoptotic neutrophils activates type 3 innate lymphoid cells to mediate tissue repair.</title>
        <authorList>
            <person name="Wang X."/>
            <person name="Cai J."/>
            <person name="Lin B."/>
            <person name="Ma M."/>
            <person name="Tao Y."/>
            <person name="Zhou Y."/>
            <person name="Bai L."/>
            <person name="Jiang W."/>
            <person name="Zhou R."/>
        </authorList>
    </citation>
    <scope>FUNCTION</scope>
</reference>
<protein>
    <recommendedName>
        <fullName>Probable G-protein coupled receptor 34</fullName>
    </recommendedName>
</protein>
<accession>Q9R1K6</accession>